<protein>
    <recommendedName>
        <fullName>Protein transport protein SEC24-2</fullName>
    </recommendedName>
</protein>
<dbReference type="EMBL" id="AY144860">
    <property type="protein sequence ID" value="AAO32424.1"/>
    <property type="molecule type" value="Genomic_DNA"/>
</dbReference>
<dbReference type="SMR" id="Q876F5"/>
<dbReference type="GO" id="GO:0030127">
    <property type="term" value="C:COPII vesicle coat"/>
    <property type="evidence" value="ECO:0007669"/>
    <property type="project" value="InterPro"/>
</dbReference>
<dbReference type="GO" id="GO:0070971">
    <property type="term" value="C:endoplasmic reticulum exit site"/>
    <property type="evidence" value="ECO:0007669"/>
    <property type="project" value="TreeGrafter"/>
</dbReference>
<dbReference type="GO" id="GO:0005789">
    <property type="term" value="C:endoplasmic reticulum membrane"/>
    <property type="evidence" value="ECO:0007669"/>
    <property type="project" value="UniProtKB-SubCell"/>
</dbReference>
<dbReference type="GO" id="GO:0000139">
    <property type="term" value="C:Golgi membrane"/>
    <property type="evidence" value="ECO:0007669"/>
    <property type="project" value="UniProtKB-SubCell"/>
</dbReference>
<dbReference type="GO" id="GO:0000149">
    <property type="term" value="F:SNARE binding"/>
    <property type="evidence" value="ECO:0007669"/>
    <property type="project" value="TreeGrafter"/>
</dbReference>
<dbReference type="GO" id="GO:0008270">
    <property type="term" value="F:zinc ion binding"/>
    <property type="evidence" value="ECO:0007669"/>
    <property type="project" value="InterPro"/>
</dbReference>
<dbReference type="GO" id="GO:0090110">
    <property type="term" value="P:COPII-coated vesicle cargo loading"/>
    <property type="evidence" value="ECO:0007669"/>
    <property type="project" value="TreeGrafter"/>
</dbReference>
<dbReference type="GO" id="GO:0006886">
    <property type="term" value="P:intracellular protein transport"/>
    <property type="evidence" value="ECO:0007669"/>
    <property type="project" value="InterPro"/>
</dbReference>
<dbReference type="CDD" id="cd01479">
    <property type="entry name" value="Sec24-like"/>
    <property type="match status" value="1"/>
</dbReference>
<dbReference type="FunFam" id="1.20.120.730:FF:000009">
    <property type="entry name" value="Vesicle coat component"/>
    <property type="match status" value="1"/>
</dbReference>
<dbReference type="FunFam" id="3.40.20.10:FF:000049">
    <property type="entry name" value="Vesicle coat component"/>
    <property type="match status" value="1"/>
</dbReference>
<dbReference type="FunFam" id="3.40.50.410:FF:000081">
    <property type="entry name" value="Vesicle coat component"/>
    <property type="match status" value="1"/>
</dbReference>
<dbReference type="Gene3D" id="2.60.40.1670">
    <property type="entry name" value="beta-sandwich domain of Sec23/24"/>
    <property type="match status" value="1"/>
</dbReference>
<dbReference type="Gene3D" id="1.20.120.730">
    <property type="entry name" value="Sec23/Sec24 helical domain"/>
    <property type="match status" value="1"/>
</dbReference>
<dbReference type="Gene3D" id="3.40.20.10">
    <property type="entry name" value="Severin"/>
    <property type="match status" value="1"/>
</dbReference>
<dbReference type="Gene3D" id="3.40.50.410">
    <property type="entry name" value="von Willebrand factor, type A domain"/>
    <property type="match status" value="1"/>
</dbReference>
<dbReference type="Gene3D" id="2.30.30.380">
    <property type="entry name" value="Zn-finger domain of Sec23/24"/>
    <property type="match status" value="1"/>
</dbReference>
<dbReference type="InterPro" id="IPR029006">
    <property type="entry name" value="ADF-H/Gelsolin-like_dom_sf"/>
</dbReference>
<dbReference type="InterPro" id="IPR007123">
    <property type="entry name" value="Gelsolin-like_dom"/>
</dbReference>
<dbReference type="InterPro" id="IPR036180">
    <property type="entry name" value="Gelsolin-like_dom_sf"/>
</dbReference>
<dbReference type="InterPro" id="IPR006900">
    <property type="entry name" value="Sec23/24_helical_dom"/>
</dbReference>
<dbReference type="InterPro" id="IPR036175">
    <property type="entry name" value="Sec23/24_helical_dom_sf"/>
</dbReference>
<dbReference type="InterPro" id="IPR006896">
    <property type="entry name" value="Sec23/24_trunk_dom"/>
</dbReference>
<dbReference type="InterPro" id="IPR012990">
    <property type="entry name" value="Sec23_24_beta_S"/>
</dbReference>
<dbReference type="InterPro" id="IPR050550">
    <property type="entry name" value="SEC23_SEC24_subfamily"/>
</dbReference>
<dbReference type="InterPro" id="IPR041742">
    <property type="entry name" value="Sec24-like_trunk_dom"/>
</dbReference>
<dbReference type="InterPro" id="IPR036465">
    <property type="entry name" value="vWFA_dom_sf"/>
</dbReference>
<dbReference type="InterPro" id="IPR006895">
    <property type="entry name" value="Znf_Sec23_Sec24"/>
</dbReference>
<dbReference type="InterPro" id="IPR036174">
    <property type="entry name" value="Znf_Sec23_Sec24_sf"/>
</dbReference>
<dbReference type="PANTHER" id="PTHR13803">
    <property type="entry name" value="SEC24-RELATED PROTEIN"/>
    <property type="match status" value="1"/>
</dbReference>
<dbReference type="PANTHER" id="PTHR13803:SF39">
    <property type="entry name" value="SECRETORY 24AB, ISOFORM A"/>
    <property type="match status" value="1"/>
</dbReference>
<dbReference type="Pfam" id="PF00626">
    <property type="entry name" value="Gelsolin"/>
    <property type="match status" value="1"/>
</dbReference>
<dbReference type="Pfam" id="PF08033">
    <property type="entry name" value="Sec23_BS"/>
    <property type="match status" value="1"/>
</dbReference>
<dbReference type="Pfam" id="PF04815">
    <property type="entry name" value="Sec23_helical"/>
    <property type="match status" value="1"/>
</dbReference>
<dbReference type="Pfam" id="PF04811">
    <property type="entry name" value="Sec23_trunk"/>
    <property type="match status" value="1"/>
</dbReference>
<dbReference type="Pfam" id="PF04810">
    <property type="entry name" value="zf-Sec23_Sec24"/>
    <property type="match status" value="1"/>
</dbReference>
<dbReference type="SUPFAM" id="SSF81995">
    <property type="entry name" value="beta-sandwich domain of Sec23/24"/>
    <property type="match status" value="1"/>
</dbReference>
<dbReference type="SUPFAM" id="SSF82754">
    <property type="entry name" value="C-terminal, gelsolin-like domain of Sec23/24"/>
    <property type="match status" value="1"/>
</dbReference>
<dbReference type="SUPFAM" id="SSF81811">
    <property type="entry name" value="Helical domain of Sec23/24"/>
    <property type="match status" value="1"/>
</dbReference>
<dbReference type="SUPFAM" id="SSF53300">
    <property type="entry name" value="vWA-like"/>
    <property type="match status" value="1"/>
</dbReference>
<dbReference type="SUPFAM" id="SSF82919">
    <property type="entry name" value="Zn-finger domain of Sec23/24"/>
    <property type="match status" value="1"/>
</dbReference>
<name>SC242_SACU7</name>
<proteinExistence type="inferred from homology"/>
<reference key="1">
    <citation type="journal article" date="2003" name="Nature">
        <title>Yeast genome duplication was followed by asynchronous differentiation of duplicated genes.</title>
        <authorList>
            <person name="Langkjaer R.B."/>
            <person name="Cliften P.F."/>
            <person name="Johnston M."/>
            <person name="Piskur J."/>
        </authorList>
    </citation>
    <scope>NUCLEOTIDE SEQUENCE [GENOMIC DNA]</scope>
    <source>
        <strain>623-6C / CBS 9787 / CLIB 533</strain>
    </source>
</reference>
<feature type="chain" id="PRO_0000295499" description="Protein transport protein SEC24-2">
    <location>
        <begin position="1"/>
        <end position="926"/>
    </location>
</feature>
<feature type="region of interest" description="Disordered" evidence="2">
    <location>
        <begin position="1"/>
        <end position="54"/>
    </location>
</feature>
<feature type="region of interest" description="Zinc finger-like">
    <location>
        <begin position="231"/>
        <end position="256"/>
    </location>
</feature>
<feature type="compositionally biased region" description="Low complexity" evidence="2">
    <location>
        <begin position="20"/>
        <end position="54"/>
    </location>
</feature>
<feature type="binding site" evidence="1">
    <location>
        <position position="231"/>
    </location>
    <ligand>
        <name>Zn(2+)</name>
        <dbReference type="ChEBI" id="CHEBI:29105"/>
    </ligand>
</feature>
<feature type="binding site" evidence="1">
    <location>
        <position position="234"/>
    </location>
    <ligand>
        <name>Zn(2+)</name>
        <dbReference type="ChEBI" id="CHEBI:29105"/>
    </ligand>
</feature>
<feature type="binding site" evidence="1">
    <location>
        <position position="253"/>
    </location>
    <ligand>
        <name>Zn(2+)</name>
        <dbReference type="ChEBI" id="CHEBI:29105"/>
    </ligand>
</feature>
<feature type="binding site" evidence="1">
    <location>
        <position position="256"/>
    </location>
    <ligand>
        <name>Zn(2+)</name>
        <dbReference type="ChEBI" id="CHEBI:29105"/>
    </ligand>
</feature>
<accession>Q876F5</accession>
<sequence length="926" mass="103437">MSHHKKRVYPQAQAQYGQSATPLQQPAQLVPPQDPAAAGMSYAQMGMPPQGAAAPMGQPQFLTPAQEQLHQQIDQAATSMNDMHLHNVPLVDPNAYMQQQVPAQAGMPFQQQQQPLPAQVYGQPSAAMGQNMRPMNQLYPIDLLTELPPPITDLTLPPPPLVIPPEKMLVPSEVSNASPDYIRSTLNAVPKNSSLLKKSKLPFGLVIRPYQHLYDDIDPPPLNEDGLIVRCRRCRSYMNPFITFIEQGRRWRCNFCRLANDVPMQMDQTDPNDPKSRYDRNEIKCAVMEYMAPKEYTLRQPPPATYCFLVDVSQASIKSGLLATTINTLLQNLDSIPNHDERTRISILCVDNAIHYFKIPLDSDNNEGSTDQINMMDIADLEEPFLPRPNSMVVSLKACRQNIESLLTKIPQIFQSNLITSFALGPALKSAYHLIGGVGGKIIVVSGTLPNLGIGKLQRRNESGVVNTSKETAQLLSCQDSFYKNFTIDCSKVQITVDLFLASEDYMDVASLSNLSRFTAGQTHFYPGFSGKNPNDIVKFSTEFAKHISMDLCMETVMRARGSTGLRMSRFYGHFFNRSSDLCAFSTMPRDQSYLFEVNVDESIMTEYCYIQVAVLLSLNNSQRRIRIITLAMPTTESLAEVYASADQLAIASFYNSKAVEKALNSSLDEARVLINKSVQDILATYKKEIVVSNTAGGAPLRLCANLRMFPLLMHSLTKHMAFRSGIVPSDHRASALNILESLPLKYLIKNIYPDVYSLHDMADEAGLPLQTEDGETTATVVLPQPLNATSSLFERYGLYLIDNGNELFLWMGGDAVPALVFDVFGTQDIFDIPIGKQEIPVVENSEFNQRVRNIINQLRNHDDIITYQSLYIVRGASLSEPVNHASAREVATLRLWASSTLVEDKILNNESYREFLQIMKARISK</sequence>
<organism>
    <name type="scientific">Saccharomyces uvarum (strain ATCC 76518 / CBS 7001 / CLIB 283 / NBRC 10550 / MCYC 623 / NCYC 2669 / NRRL Y-11845)</name>
    <name type="common">Yeast</name>
    <name type="synonym">Saccharomyces bayanus var. uvarum</name>
    <dbReference type="NCBI Taxonomy" id="659244"/>
    <lineage>
        <taxon>Eukaryota</taxon>
        <taxon>Fungi</taxon>
        <taxon>Dikarya</taxon>
        <taxon>Ascomycota</taxon>
        <taxon>Saccharomycotina</taxon>
        <taxon>Saccharomycetes</taxon>
        <taxon>Saccharomycetales</taxon>
        <taxon>Saccharomycetaceae</taxon>
        <taxon>Saccharomyces</taxon>
    </lineage>
</organism>
<keyword id="KW-0963">Cytoplasm</keyword>
<keyword id="KW-0968">Cytoplasmic vesicle</keyword>
<keyword id="KW-0256">Endoplasmic reticulum</keyword>
<keyword id="KW-0931">ER-Golgi transport</keyword>
<keyword id="KW-0333">Golgi apparatus</keyword>
<keyword id="KW-0472">Membrane</keyword>
<keyword id="KW-0479">Metal-binding</keyword>
<keyword id="KW-0653">Protein transport</keyword>
<keyword id="KW-0813">Transport</keyword>
<keyword id="KW-0862">Zinc</keyword>
<gene>
    <name type="primary">SEC242</name>
</gene>
<comment type="function">
    <text evidence="1">Component of the coat protein complex II (COPII) which promotes the formation of transport vesicles from the endoplasmic reticulum (ER). The coat has two main functions, the physical deformation of the endoplasmic reticulum membrane into vesicles and the selection of cargo molecules (By similarity).</text>
</comment>
<comment type="subunit">
    <text evidence="1">The COPII coat is composed of at least 5 proteins: the SEC23/24 complex, the SEC13/31 complex, and the protein SAR1. Golgi apparatus membrane; Peripheral membrane protein; Cytoplasmic side.</text>
</comment>
<comment type="subcellular location">
    <subcellularLocation>
        <location evidence="1">Cytoplasm</location>
    </subcellularLocation>
    <subcellularLocation>
        <location evidence="1">Cytoplasmic vesicle</location>
        <location evidence="1">COPII-coated vesicle membrane</location>
        <topology evidence="1">Peripheral membrane protein</topology>
        <orientation evidence="1">Cytoplasmic side</orientation>
    </subcellularLocation>
    <subcellularLocation>
        <location evidence="1">Endoplasmic reticulum membrane</location>
        <topology evidence="1">Peripheral membrane protein</topology>
        <orientation evidence="1">Cytoplasmic side</orientation>
    </subcellularLocation>
    <subcellularLocation>
        <location evidence="1">Golgi apparatus membrane</location>
        <topology evidence="1">Peripheral membrane protein</topology>
        <orientation evidence="1">Cytoplasmic side</orientation>
    </subcellularLocation>
</comment>
<comment type="similarity">
    <text evidence="3">Belongs to the SEC23/SEC24 family. SEC24 subfamily.</text>
</comment>
<evidence type="ECO:0000250" key="1"/>
<evidence type="ECO:0000256" key="2">
    <source>
        <dbReference type="SAM" id="MobiDB-lite"/>
    </source>
</evidence>
<evidence type="ECO:0000305" key="3"/>